<comment type="function">
    <text evidence="1">Phosphorolytic 3'-5' exoribonuclease that plays an important role in tRNA 3'-end maturation. Removes nucleotide residues following the 3'-CCA terminus of tRNAs; can also add nucleotides to the ends of RNA molecules by using nucleoside diphosphates as substrates, but this may not be physiologically important. Probably plays a role in initiation of 16S rRNA degradation (leading to ribosome degradation) during starvation.</text>
</comment>
<comment type="catalytic activity">
    <reaction evidence="1">
        <text>tRNA(n+1) + phosphate = tRNA(n) + a ribonucleoside 5'-diphosphate</text>
        <dbReference type="Rhea" id="RHEA:10628"/>
        <dbReference type="Rhea" id="RHEA-COMP:17343"/>
        <dbReference type="Rhea" id="RHEA-COMP:17344"/>
        <dbReference type="ChEBI" id="CHEBI:43474"/>
        <dbReference type="ChEBI" id="CHEBI:57930"/>
        <dbReference type="ChEBI" id="CHEBI:173114"/>
        <dbReference type="EC" id="2.7.7.56"/>
    </reaction>
</comment>
<comment type="subunit">
    <text evidence="1">Homohexameric ring arranged as a trimer of dimers.</text>
</comment>
<comment type="similarity">
    <text evidence="1">Belongs to the RNase PH family.</text>
</comment>
<keyword id="KW-0548">Nucleotidyltransferase</keyword>
<keyword id="KW-0694">RNA-binding</keyword>
<keyword id="KW-0698">rRNA processing</keyword>
<keyword id="KW-0808">Transferase</keyword>
<keyword id="KW-0819">tRNA processing</keyword>
<keyword id="KW-0820">tRNA-binding</keyword>
<gene>
    <name evidence="1" type="primary">rph</name>
    <name type="ordered locus">Bcen_0518</name>
</gene>
<name>RNPH_BURO1</name>
<organism>
    <name type="scientific">Burkholderia orbicola (strain AU 1054)</name>
    <dbReference type="NCBI Taxonomy" id="331271"/>
    <lineage>
        <taxon>Bacteria</taxon>
        <taxon>Pseudomonadati</taxon>
        <taxon>Pseudomonadota</taxon>
        <taxon>Betaproteobacteria</taxon>
        <taxon>Burkholderiales</taxon>
        <taxon>Burkholderiaceae</taxon>
        <taxon>Burkholderia</taxon>
        <taxon>Burkholderia cepacia complex</taxon>
        <taxon>Burkholderia orbicola</taxon>
    </lineage>
</organism>
<feature type="chain" id="PRO_1000024783" description="Ribonuclease PH">
    <location>
        <begin position="1"/>
        <end position="246"/>
    </location>
</feature>
<feature type="binding site" evidence="1">
    <location>
        <position position="91"/>
    </location>
    <ligand>
        <name>phosphate</name>
        <dbReference type="ChEBI" id="CHEBI:43474"/>
        <note>substrate</note>
    </ligand>
</feature>
<feature type="binding site" evidence="1">
    <location>
        <begin position="129"/>
        <end position="131"/>
    </location>
    <ligand>
        <name>phosphate</name>
        <dbReference type="ChEBI" id="CHEBI:43474"/>
        <note>substrate</note>
    </ligand>
</feature>
<reference key="1">
    <citation type="submission" date="2006-05" db="EMBL/GenBank/DDBJ databases">
        <title>Complete sequence of chromosome 1 of Burkholderia cenocepacia AU 1054.</title>
        <authorList>
            <consortium name="US DOE Joint Genome Institute"/>
            <person name="Copeland A."/>
            <person name="Lucas S."/>
            <person name="Lapidus A."/>
            <person name="Barry K."/>
            <person name="Detter J.C."/>
            <person name="Glavina del Rio T."/>
            <person name="Hammon N."/>
            <person name="Israni S."/>
            <person name="Dalin E."/>
            <person name="Tice H."/>
            <person name="Pitluck S."/>
            <person name="Chain P."/>
            <person name="Malfatti S."/>
            <person name="Shin M."/>
            <person name="Vergez L."/>
            <person name="Schmutz J."/>
            <person name="Larimer F."/>
            <person name="Land M."/>
            <person name="Hauser L."/>
            <person name="Kyrpides N."/>
            <person name="Lykidis A."/>
            <person name="LiPuma J.J."/>
            <person name="Konstantinidis K."/>
            <person name="Tiedje J.M."/>
            <person name="Richardson P."/>
        </authorList>
    </citation>
    <scope>NUCLEOTIDE SEQUENCE [LARGE SCALE GENOMIC DNA]</scope>
    <source>
        <strain>AU 1054</strain>
    </source>
</reference>
<sequence>MTSSVSRPSGRRADELRKVALTRHYTKHAEGSVLVEFGDTKVLCTASVAERVPEFLRERGQGWLTAEYGMLPRATHTRSDREAARGKQTGRTQEIQRLIGRALRAVFDLEALGPRTIHIDCDVIQADGGTRTASITGAFVAAHDAVSTLIAAGKLARSPITDHVAAISVGVYEGAPVLDLDYAEDSRCDTDMNVVMTGAGGFVEVQGTAEGVPFSRAEMNALLDLAQGGIAELVQLQKDVLGASHA</sequence>
<evidence type="ECO:0000255" key="1">
    <source>
        <dbReference type="HAMAP-Rule" id="MF_00564"/>
    </source>
</evidence>
<dbReference type="EC" id="2.7.7.56" evidence="1"/>
<dbReference type="EMBL" id="CP000378">
    <property type="protein sequence ID" value="ABF75430.1"/>
    <property type="molecule type" value="Genomic_DNA"/>
</dbReference>
<dbReference type="SMR" id="Q1BY75"/>
<dbReference type="HOGENOM" id="CLU_050858_0_0_4"/>
<dbReference type="GO" id="GO:0000175">
    <property type="term" value="F:3'-5'-RNA exonuclease activity"/>
    <property type="evidence" value="ECO:0007669"/>
    <property type="project" value="UniProtKB-UniRule"/>
</dbReference>
<dbReference type="GO" id="GO:0000049">
    <property type="term" value="F:tRNA binding"/>
    <property type="evidence" value="ECO:0007669"/>
    <property type="project" value="UniProtKB-UniRule"/>
</dbReference>
<dbReference type="GO" id="GO:0009022">
    <property type="term" value="F:tRNA nucleotidyltransferase activity"/>
    <property type="evidence" value="ECO:0007669"/>
    <property type="project" value="UniProtKB-UniRule"/>
</dbReference>
<dbReference type="GO" id="GO:0016075">
    <property type="term" value="P:rRNA catabolic process"/>
    <property type="evidence" value="ECO:0007669"/>
    <property type="project" value="UniProtKB-UniRule"/>
</dbReference>
<dbReference type="GO" id="GO:0006364">
    <property type="term" value="P:rRNA processing"/>
    <property type="evidence" value="ECO:0007669"/>
    <property type="project" value="UniProtKB-KW"/>
</dbReference>
<dbReference type="GO" id="GO:0008033">
    <property type="term" value="P:tRNA processing"/>
    <property type="evidence" value="ECO:0007669"/>
    <property type="project" value="UniProtKB-UniRule"/>
</dbReference>
<dbReference type="CDD" id="cd11362">
    <property type="entry name" value="RNase_PH_bact"/>
    <property type="match status" value="1"/>
</dbReference>
<dbReference type="FunFam" id="3.30.230.70:FF:000003">
    <property type="entry name" value="Ribonuclease PH"/>
    <property type="match status" value="1"/>
</dbReference>
<dbReference type="Gene3D" id="3.30.230.70">
    <property type="entry name" value="GHMP Kinase, N-terminal domain"/>
    <property type="match status" value="1"/>
</dbReference>
<dbReference type="HAMAP" id="MF_00564">
    <property type="entry name" value="RNase_PH"/>
    <property type="match status" value="1"/>
</dbReference>
<dbReference type="InterPro" id="IPR001247">
    <property type="entry name" value="ExoRNase_PH_dom1"/>
</dbReference>
<dbReference type="InterPro" id="IPR015847">
    <property type="entry name" value="ExoRNase_PH_dom2"/>
</dbReference>
<dbReference type="InterPro" id="IPR036345">
    <property type="entry name" value="ExoRNase_PH_dom2_sf"/>
</dbReference>
<dbReference type="InterPro" id="IPR027408">
    <property type="entry name" value="PNPase/RNase_PH_dom_sf"/>
</dbReference>
<dbReference type="InterPro" id="IPR020568">
    <property type="entry name" value="Ribosomal_Su5_D2-typ_SF"/>
</dbReference>
<dbReference type="InterPro" id="IPR050080">
    <property type="entry name" value="RNase_PH"/>
</dbReference>
<dbReference type="InterPro" id="IPR002381">
    <property type="entry name" value="RNase_PH_bac-type"/>
</dbReference>
<dbReference type="InterPro" id="IPR018336">
    <property type="entry name" value="RNase_PH_CS"/>
</dbReference>
<dbReference type="NCBIfam" id="TIGR01966">
    <property type="entry name" value="RNasePH"/>
    <property type="match status" value="1"/>
</dbReference>
<dbReference type="PANTHER" id="PTHR11953">
    <property type="entry name" value="EXOSOME COMPLEX COMPONENT"/>
    <property type="match status" value="1"/>
</dbReference>
<dbReference type="PANTHER" id="PTHR11953:SF0">
    <property type="entry name" value="EXOSOME COMPLEX COMPONENT RRP41"/>
    <property type="match status" value="1"/>
</dbReference>
<dbReference type="Pfam" id="PF01138">
    <property type="entry name" value="RNase_PH"/>
    <property type="match status" value="1"/>
</dbReference>
<dbReference type="Pfam" id="PF03725">
    <property type="entry name" value="RNase_PH_C"/>
    <property type="match status" value="1"/>
</dbReference>
<dbReference type="SUPFAM" id="SSF55666">
    <property type="entry name" value="Ribonuclease PH domain 2-like"/>
    <property type="match status" value="1"/>
</dbReference>
<dbReference type="SUPFAM" id="SSF54211">
    <property type="entry name" value="Ribosomal protein S5 domain 2-like"/>
    <property type="match status" value="1"/>
</dbReference>
<dbReference type="PROSITE" id="PS01277">
    <property type="entry name" value="RIBONUCLEASE_PH"/>
    <property type="match status" value="1"/>
</dbReference>
<accession>Q1BY75</accession>
<protein>
    <recommendedName>
        <fullName evidence="1">Ribonuclease PH</fullName>
        <shortName evidence="1">RNase PH</shortName>
        <ecNumber evidence="1">2.7.7.56</ecNumber>
    </recommendedName>
    <alternativeName>
        <fullName evidence="1">tRNA nucleotidyltransferase</fullName>
    </alternativeName>
</protein>
<proteinExistence type="inferred from homology"/>